<accession>S8B3H6</accession>
<feature type="chain" id="PRO_0000453770" description="C6 finger transcription factor poxB">
    <location>
        <begin position="1"/>
        <end position="574"/>
    </location>
</feature>
<feature type="DNA-binding region" description="Zn(2)-C6 fungal-type" evidence="1">
    <location>
        <begin position="19"/>
        <end position="51"/>
    </location>
</feature>
<feature type="region of interest" description="Disordered" evidence="2">
    <location>
        <begin position="111"/>
        <end position="133"/>
    </location>
</feature>
<feature type="region of interest" description="Disordered" evidence="2">
    <location>
        <begin position="242"/>
        <end position="262"/>
    </location>
</feature>
<feature type="region of interest" description="Disordered" evidence="2">
    <location>
        <begin position="376"/>
        <end position="404"/>
    </location>
</feature>
<protein>
    <recommendedName>
        <fullName evidence="4">C6 finger transcription factor poxB</fullName>
    </recommendedName>
    <alternativeName>
        <fullName evidence="4">Oxaleimides biosynthesis cluster protein B</fullName>
    </alternativeName>
</protein>
<gene>
    <name evidence="4" type="primary">poxB</name>
    <name type="ORF">PDE_04009</name>
</gene>
<comment type="function">
    <text evidence="3">Transcription factor that positively regulates the expression of the gene cluster that mediates the biosynthesis of oxaleimides, cytotoxic compounds containing an unusual disubstituted succinimide moiety.</text>
</comment>
<comment type="subcellular location">
    <subcellularLocation>
        <location evidence="1">Nucleus</location>
    </subcellularLocation>
</comment>
<keyword id="KW-0238">DNA-binding</keyword>
<keyword id="KW-0479">Metal-binding</keyword>
<keyword id="KW-0539">Nucleus</keyword>
<keyword id="KW-1185">Reference proteome</keyword>
<keyword id="KW-0804">Transcription</keyword>
<keyword id="KW-0805">Transcription regulation</keyword>
<keyword id="KW-0862">Zinc</keyword>
<evidence type="ECO:0000255" key="1">
    <source>
        <dbReference type="PROSITE-ProRule" id="PRU00227"/>
    </source>
</evidence>
<evidence type="ECO:0000256" key="2">
    <source>
        <dbReference type="SAM" id="MobiDB-lite"/>
    </source>
</evidence>
<evidence type="ECO:0000269" key="3">
    <source>
    </source>
</evidence>
<evidence type="ECO:0000303" key="4">
    <source>
    </source>
</evidence>
<organism>
    <name type="scientific">Penicillium oxalicum (strain 114-2 / CGMCC 5302)</name>
    <name type="common">Penicillium decumbens</name>
    <dbReference type="NCBI Taxonomy" id="933388"/>
    <lineage>
        <taxon>Eukaryota</taxon>
        <taxon>Fungi</taxon>
        <taxon>Dikarya</taxon>
        <taxon>Ascomycota</taxon>
        <taxon>Pezizomycotina</taxon>
        <taxon>Eurotiomycetes</taxon>
        <taxon>Eurotiomycetidae</taxon>
        <taxon>Eurotiales</taxon>
        <taxon>Aspergillaceae</taxon>
        <taxon>Penicillium</taxon>
    </lineage>
</organism>
<name>POXB_PENO1</name>
<sequence length="574" mass="62081">MSEAEPSVVVAEQCRRSACDRCRGQKLRCERPVSNSSTTPCRRCLKAHVRCVTTAQPHRTKPLSSLQYLHHTESNYDPHSATVAGQLPVAAVAGLGDLDPSLLHMTGVQNPRRLSHSSSMANPVDSRPPGRTRRLSNPDHFLPHPPLHPNGVLDTDGTPLLDSIDHLPDMTASRGFGFSAALTPHSPSGSSDFFDYFRPMAEDNNRSPWMDAFTNLPPDHREGTPAGSNYRGSLTGENQFRSSLQSSRGLNGFETPQRESRHREMDIVSIKNECIARMGKLNRGLLQDVGLVNSGKVAGTLLFSQASRSTYLEVEKGRKGGQNYVIGKMLHSSKELLDILKQLERCKSTLFPPGHTERTTSTADEVTTAMTETTTLNQTGSHAPSSPLGGNPLPPLSGPLSASASHSSSCASSSSASASTSGASLLSSSTSAPSTSPAISLQLDTTLTLLFLTGYTSVIQLYEGVFSFIRDSVAANPSGSNFLPTLPKLQVDGFEVGSSTRDLQICILLQVSTHILNQIEERLHAIRDRAEGHVPAALLDTILDRSDPSQRGAKGRELCRIVRDIKEHLKHYAE</sequence>
<reference key="1">
    <citation type="journal article" date="2013" name="PLoS ONE">
        <title>Genomic and secretomic analyses reveal unique features of the lignocellulolytic enzyme system of Penicillium decumbens.</title>
        <authorList>
            <person name="Liu G."/>
            <person name="Zhang L."/>
            <person name="Wei X."/>
            <person name="Zou G."/>
            <person name="Qin Y."/>
            <person name="Ma L."/>
            <person name="Li J."/>
            <person name="Zheng H."/>
            <person name="Wang S."/>
            <person name="Wang C."/>
            <person name="Xun L."/>
            <person name="Zhao G.-P."/>
            <person name="Zhou Z."/>
            <person name="Qu Y."/>
        </authorList>
    </citation>
    <scope>NUCLEOTIDE SEQUENCE [LARGE SCALE GENOMIC DNA]</scope>
    <source>
        <strain>114-2 / CGMCC 5302</strain>
    </source>
</reference>
<reference key="2">
    <citation type="journal article" date="2017" name="J. Am. Chem. Soc.">
        <title>Collaborative Biosynthesis of Maleimide- and Succinimide-Containing Natural Products by Fungal Polyketide Megasynthases.</title>
        <authorList>
            <person name="Sato M."/>
            <person name="Dander J.E."/>
            <person name="Sato C."/>
            <person name="Hung Y.S."/>
            <person name="Gao S.S."/>
            <person name="Tang M.C."/>
            <person name="Hang L."/>
            <person name="Winter J.M."/>
            <person name="Garg N.K."/>
            <person name="Watanabe K."/>
            <person name="Tang Y."/>
        </authorList>
    </citation>
    <scope>FUNCTION</scope>
</reference>
<reference key="3">
    <citation type="journal article" date="2020" name="Chem. Commun. (Camb.)">
        <title>Evidence for enzyme catalysed intramolecular [4+2] Diels-Alder cyclization during the biosynthesis of pyrichalasin H.</title>
        <authorList>
            <person name="Hantke V."/>
            <person name="Skellam E.J."/>
            <person name="Cox R.J."/>
        </authorList>
    </citation>
    <scope>FUNCTION</scope>
</reference>
<proteinExistence type="inferred from homology"/>
<dbReference type="EMBL" id="KB644411">
    <property type="protein sequence ID" value="EPS29062.1"/>
    <property type="molecule type" value="Genomic_DNA"/>
</dbReference>
<dbReference type="SMR" id="S8B3H6"/>
<dbReference type="STRING" id="933388.S8B3H6"/>
<dbReference type="eggNOG" id="ENOG502SYRD">
    <property type="taxonomic scope" value="Eukaryota"/>
</dbReference>
<dbReference type="HOGENOM" id="CLU_494289_0_0_1"/>
<dbReference type="OrthoDB" id="4222821at2759"/>
<dbReference type="PhylomeDB" id="S8B3H6"/>
<dbReference type="Proteomes" id="UP000019376">
    <property type="component" value="Unassembled WGS sequence"/>
</dbReference>
<dbReference type="GO" id="GO:0005634">
    <property type="term" value="C:nucleus"/>
    <property type="evidence" value="ECO:0007669"/>
    <property type="project" value="UniProtKB-SubCell"/>
</dbReference>
<dbReference type="GO" id="GO:0003677">
    <property type="term" value="F:DNA binding"/>
    <property type="evidence" value="ECO:0007669"/>
    <property type="project" value="UniProtKB-KW"/>
</dbReference>
<dbReference type="GO" id="GO:0000981">
    <property type="term" value="F:DNA-binding transcription factor activity, RNA polymerase II-specific"/>
    <property type="evidence" value="ECO:0007669"/>
    <property type="project" value="InterPro"/>
</dbReference>
<dbReference type="GO" id="GO:0008270">
    <property type="term" value="F:zinc ion binding"/>
    <property type="evidence" value="ECO:0007669"/>
    <property type="project" value="InterPro"/>
</dbReference>
<dbReference type="CDD" id="cd00067">
    <property type="entry name" value="GAL4"/>
    <property type="match status" value="1"/>
</dbReference>
<dbReference type="Gene3D" id="4.10.240.10">
    <property type="entry name" value="Zn(2)-C6 fungal-type DNA-binding domain"/>
    <property type="match status" value="1"/>
</dbReference>
<dbReference type="InterPro" id="IPR036864">
    <property type="entry name" value="Zn2-C6_fun-type_DNA-bd_sf"/>
</dbReference>
<dbReference type="InterPro" id="IPR001138">
    <property type="entry name" value="Zn2Cys6_DnaBD"/>
</dbReference>
<dbReference type="Pfam" id="PF00172">
    <property type="entry name" value="Zn_clus"/>
    <property type="match status" value="1"/>
</dbReference>
<dbReference type="SUPFAM" id="SSF57701">
    <property type="entry name" value="Zn2/Cys6 DNA-binding domain"/>
    <property type="match status" value="1"/>
</dbReference>
<dbReference type="PROSITE" id="PS00463">
    <property type="entry name" value="ZN2_CY6_FUNGAL_1"/>
    <property type="match status" value="1"/>
</dbReference>
<dbReference type="PROSITE" id="PS50048">
    <property type="entry name" value="ZN2_CY6_FUNGAL_2"/>
    <property type="match status" value="1"/>
</dbReference>